<organism>
    <name type="scientific">Macrococcus caseolyticus (strain JCSC5402)</name>
    <name type="common">Macrococcoides caseolyticum</name>
    <dbReference type="NCBI Taxonomy" id="458233"/>
    <lineage>
        <taxon>Bacteria</taxon>
        <taxon>Bacillati</taxon>
        <taxon>Bacillota</taxon>
        <taxon>Bacilli</taxon>
        <taxon>Bacillales</taxon>
        <taxon>Staphylococcaceae</taxon>
        <taxon>Macrococcoides</taxon>
    </lineage>
</organism>
<reference key="1">
    <citation type="journal article" date="2009" name="J. Bacteriol.">
        <title>Complete genome sequence of Macrococcus caseolyticus strain JCSCS5402, reflecting the ancestral genome of the human-pathogenic staphylococci.</title>
        <authorList>
            <person name="Baba T."/>
            <person name="Kuwahara-Arai K."/>
            <person name="Uchiyama I."/>
            <person name="Takeuchi F."/>
            <person name="Ito T."/>
            <person name="Hiramatsu K."/>
        </authorList>
    </citation>
    <scope>NUCLEOTIDE SEQUENCE [LARGE SCALE GENOMIC DNA]</scope>
    <source>
        <strain>JCSC5402</strain>
    </source>
</reference>
<dbReference type="EC" id="6.1.1.11" evidence="1"/>
<dbReference type="EMBL" id="AP009484">
    <property type="protein sequence ID" value="BAH16720.1"/>
    <property type="molecule type" value="Genomic_DNA"/>
</dbReference>
<dbReference type="RefSeq" id="WP_012655924.1">
    <property type="nucleotide sequence ID" value="NC_011999.1"/>
</dbReference>
<dbReference type="SMR" id="B9E909"/>
<dbReference type="STRING" id="458233.MCCL_0013"/>
<dbReference type="KEGG" id="mcl:MCCL_0013"/>
<dbReference type="eggNOG" id="COG0172">
    <property type="taxonomic scope" value="Bacteria"/>
</dbReference>
<dbReference type="HOGENOM" id="CLU_023797_1_1_9"/>
<dbReference type="OrthoDB" id="9804647at2"/>
<dbReference type="UniPathway" id="UPA00906">
    <property type="reaction ID" value="UER00895"/>
</dbReference>
<dbReference type="Proteomes" id="UP000001383">
    <property type="component" value="Chromosome"/>
</dbReference>
<dbReference type="GO" id="GO:0005737">
    <property type="term" value="C:cytoplasm"/>
    <property type="evidence" value="ECO:0007669"/>
    <property type="project" value="UniProtKB-SubCell"/>
</dbReference>
<dbReference type="GO" id="GO:0005524">
    <property type="term" value="F:ATP binding"/>
    <property type="evidence" value="ECO:0007669"/>
    <property type="project" value="UniProtKB-UniRule"/>
</dbReference>
<dbReference type="GO" id="GO:0140096">
    <property type="term" value="F:catalytic activity, acting on a protein"/>
    <property type="evidence" value="ECO:0007669"/>
    <property type="project" value="UniProtKB-ARBA"/>
</dbReference>
<dbReference type="GO" id="GO:0004828">
    <property type="term" value="F:serine-tRNA ligase activity"/>
    <property type="evidence" value="ECO:0007669"/>
    <property type="project" value="UniProtKB-UniRule"/>
</dbReference>
<dbReference type="GO" id="GO:0016740">
    <property type="term" value="F:transferase activity"/>
    <property type="evidence" value="ECO:0007669"/>
    <property type="project" value="UniProtKB-ARBA"/>
</dbReference>
<dbReference type="GO" id="GO:0016260">
    <property type="term" value="P:selenocysteine biosynthetic process"/>
    <property type="evidence" value="ECO:0007669"/>
    <property type="project" value="UniProtKB-UniRule"/>
</dbReference>
<dbReference type="GO" id="GO:0006434">
    <property type="term" value="P:seryl-tRNA aminoacylation"/>
    <property type="evidence" value="ECO:0007669"/>
    <property type="project" value="UniProtKB-UniRule"/>
</dbReference>
<dbReference type="CDD" id="cd00770">
    <property type="entry name" value="SerRS_core"/>
    <property type="match status" value="1"/>
</dbReference>
<dbReference type="Gene3D" id="3.30.930.10">
    <property type="entry name" value="Bira Bifunctional Protein, Domain 2"/>
    <property type="match status" value="1"/>
</dbReference>
<dbReference type="Gene3D" id="1.10.287.40">
    <property type="entry name" value="Serine-tRNA synthetase, tRNA binding domain"/>
    <property type="match status" value="1"/>
</dbReference>
<dbReference type="HAMAP" id="MF_00176">
    <property type="entry name" value="Ser_tRNA_synth_type1"/>
    <property type="match status" value="1"/>
</dbReference>
<dbReference type="InterPro" id="IPR002314">
    <property type="entry name" value="aa-tRNA-synt_IIb"/>
</dbReference>
<dbReference type="InterPro" id="IPR006195">
    <property type="entry name" value="aa-tRNA-synth_II"/>
</dbReference>
<dbReference type="InterPro" id="IPR045864">
    <property type="entry name" value="aa-tRNA-synth_II/BPL/LPL"/>
</dbReference>
<dbReference type="InterPro" id="IPR002317">
    <property type="entry name" value="Ser-tRNA-ligase_type_1"/>
</dbReference>
<dbReference type="InterPro" id="IPR015866">
    <property type="entry name" value="Ser-tRNA-synth_1_N"/>
</dbReference>
<dbReference type="InterPro" id="IPR042103">
    <property type="entry name" value="SerRS_1_N_sf"/>
</dbReference>
<dbReference type="InterPro" id="IPR033729">
    <property type="entry name" value="SerRS_core"/>
</dbReference>
<dbReference type="InterPro" id="IPR010978">
    <property type="entry name" value="tRNA-bd_arm"/>
</dbReference>
<dbReference type="NCBIfam" id="TIGR00414">
    <property type="entry name" value="serS"/>
    <property type="match status" value="1"/>
</dbReference>
<dbReference type="PANTHER" id="PTHR43697:SF1">
    <property type="entry name" value="SERINE--TRNA LIGASE"/>
    <property type="match status" value="1"/>
</dbReference>
<dbReference type="PANTHER" id="PTHR43697">
    <property type="entry name" value="SERYL-TRNA SYNTHETASE"/>
    <property type="match status" value="1"/>
</dbReference>
<dbReference type="Pfam" id="PF02403">
    <property type="entry name" value="Seryl_tRNA_N"/>
    <property type="match status" value="1"/>
</dbReference>
<dbReference type="Pfam" id="PF00587">
    <property type="entry name" value="tRNA-synt_2b"/>
    <property type="match status" value="1"/>
</dbReference>
<dbReference type="PIRSF" id="PIRSF001529">
    <property type="entry name" value="Ser-tRNA-synth_IIa"/>
    <property type="match status" value="1"/>
</dbReference>
<dbReference type="PRINTS" id="PR00981">
    <property type="entry name" value="TRNASYNTHSER"/>
</dbReference>
<dbReference type="SUPFAM" id="SSF55681">
    <property type="entry name" value="Class II aaRS and biotin synthetases"/>
    <property type="match status" value="1"/>
</dbReference>
<dbReference type="SUPFAM" id="SSF46589">
    <property type="entry name" value="tRNA-binding arm"/>
    <property type="match status" value="1"/>
</dbReference>
<dbReference type="PROSITE" id="PS50862">
    <property type="entry name" value="AA_TRNA_LIGASE_II"/>
    <property type="match status" value="1"/>
</dbReference>
<evidence type="ECO:0000255" key="1">
    <source>
        <dbReference type="HAMAP-Rule" id="MF_00176"/>
    </source>
</evidence>
<protein>
    <recommendedName>
        <fullName evidence="1">Serine--tRNA ligase</fullName>
        <ecNumber evidence="1">6.1.1.11</ecNumber>
    </recommendedName>
    <alternativeName>
        <fullName evidence="1">Seryl-tRNA synthetase</fullName>
        <shortName evidence="1">SerRS</shortName>
    </alternativeName>
    <alternativeName>
        <fullName evidence="1">Seryl-tRNA(Ser/Sec) synthetase</fullName>
    </alternativeName>
</protein>
<keyword id="KW-0030">Aminoacyl-tRNA synthetase</keyword>
<keyword id="KW-0067">ATP-binding</keyword>
<keyword id="KW-0963">Cytoplasm</keyword>
<keyword id="KW-0436">Ligase</keyword>
<keyword id="KW-0547">Nucleotide-binding</keyword>
<keyword id="KW-0648">Protein biosynthesis</keyword>
<keyword id="KW-1185">Reference proteome</keyword>
<name>SYS_MACCJ</name>
<feature type="chain" id="PRO_1000199490" description="Serine--tRNA ligase">
    <location>
        <begin position="1"/>
        <end position="423"/>
    </location>
</feature>
<feature type="binding site" evidence="1">
    <location>
        <begin position="230"/>
        <end position="232"/>
    </location>
    <ligand>
        <name>L-serine</name>
        <dbReference type="ChEBI" id="CHEBI:33384"/>
    </ligand>
</feature>
<feature type="binding site" evidence="1">
    <location>
        <begin position="261"/>
        <end position="263"/>
    </location>
    <ligand>
        <name>ATP</name>
        <dbReference type="ChEBI" id="CHEBI:30616"/>
    </ligand>
</feature>
<feature type="binding site" evidence="1">
    <location>
        <position position="284"/>
    </location>
    <ligand>
        <name>L-serine</name>
        <dbReference type="ChEBI" id="CHEBI:33384"/>
    </ligand>
</feature>
<feature type="binding site" evidence="1">
    <location>
        <begin position="348"/>
        <end position="351"/>
    </location>
    <ligand>
        <name>ATP</name>
        <dbReference type="ChEBI" id="CHEBI:30616"/>
    </ligand>
</feature>
<feature type="binding site" evidence="1">
    <location>
        <position position="384"/>
    </location>
    <ligand>
        <name>L-serine</name>
        <dbReference type="ChEBI" id="CHEBI:33384"/>
    </ligand>
</feature>
<comment type="function">
    <text evidence="1">Catalyzes the attachment of serine to tRNA(Ser). Is also able to aminoacylate tRNA(Sec) with serine, to form the misacylated tRNA L-seryl-tRNA(Sec), which will be further converted into selenocysteinyl-tRNA(Sec).</text>
</comment>
<comment type="catalytic activity">
    <reaction evidence="1">
        <text>tRNA(Ser) + L-serine + ATP = L-seryl-tRNA(Ser) + AMP + diphosphate + H(+)</text>
        <dbReference type="Rhea" id="RHEA:12292"/>
        <dbReference type="Rhea" id="RHEA-COMP:9669"/>
        <dbReference type="Rhea" id="RHEA-COMP:9703"/>
        <dbReference type="ChEBI" id="CHEBI:15378"/>
        <dbReference type="ChEBI" id="CHEBI:30616"/>
        <dbReference type="ChEBI" id="CHEBI:33019"/>
        <dbReference type="ChEBI" id="CHEBI:33384"/>
        <dbReference type="ChEBI" id="CHEBI:78442"/>
        <dbReference type="ChEBI" id="CHEBI:78533"/>
        <dbReference type="ChEBI" id="CHEBI:456215"/>
        <dbReference type="EC" id="6.1.1.11"/>
    </reaction>
</comment>
<comment type="catalytic activity">
    <reaction evidence="1">
        <text>tRNA(Sec) + L-serine + ATP = L-seryl-tRNA(Sec) + AMP + diphosphate + H(+)</text>
        <dbReference type="Rhea" id="RHEA:42580"/>
        <dbReference type="Rhea" id="RHEA-COMP:9742"/>
        <dbReference type="Rhea" id="RHEA-COMP:10128"/>
        <dbReference type="ChEBI" id="CHEBI:15378"/>
        <dbReference type="ChEBI" id="CHEBI:30616"/>
        <dbReference type="ChEBI" id="CHEBI:33019"/>
        <dbReference type="ChEBI" id="CHEBI:33384"/>
        <dbReference type="ChEBI" id="CHEBI:78442"/>
        <dbReference type="ChEBI" id="CHEBI:78533"/>
        <dbReference type="ChEBI" id="CHEBI:456215"/>
        <dbReference type="EC" id="6.1.1.11"/>
    </reaction>
</comment>
<comment type="pathway">
    <text evidence="1">Aminoacyl-tRNA biosynthesis; selenocysteinyl-tRNA(Sec) biosynthesis; L-seryl-tRNA(Sec) from L-serine and tRNA(Sec): step 1/1.</text>
</comment>
<comment type="subunit">
    <text evidence="1">Homodimer. The tRNA molecule binds across the dimer.</text>
</comment>
<comment type="subcellular location">
    <subcellularLocation>
        <location evidence="1">Cytoplasm</location>
    </subcellularLocation>
</comment>
<comment type="domain">
    <text evidence="1">Consists of two distinct domains, a catalytic core and a N-terminal extension that is involved in tRNA binding.</text>
</comment>
<comment type="similarity">
    <text evidence="1">Belongs to the class-II aminoacyl-tRNA synthetase family. Type-1 seryl-tRNA synthetase subfamily.</text>
</comment>
<accession>B9E909</accession>
<sequence length="423" mass="48020">MLDIKLFRTEPEFVKKKLEMRAIDTSIVDEILELDIAARELTARTEELKAKRNKTSEEIAQKKRNKENADDAIKAMREVGEEIKRIDTELNEVSQTLKDKLVRLPNLVSDETPFGKDEDENVEVKKWGTPRTFDFEAKAHWDIVENLKMADFERAAKVSGARFAFLTKDGARLERALMNFMLDTHRANGYEEMVTPQLVNAASMFGTGQLPKFEEDLFKVEKEGLYTIPTSEVPLTNFYRDEILTNDMLPTKFTAMTACFRSEAGSAGRDTRGLIRMHQFNKVEMVRFERPEDSYAALEDMTRSAESILEKLNIPYRTIALCSGDIGFGAAKTYDVEVWLPSYDAYKEISSCSNMTDFQARRANIRFKRDKNAKAELVNTLNGSGLAVGRTFAAVVENYQNEDGSITVPEVLVPYMGGQTVIK</sequence>
<gene>
    <name evidence="1" type="primary">serS</name>
    <name type="ordered locus">MCCL_0013</name>
</gene>
<proteinExistence type="inferred from homology"/>